<dbReference type="EMBL" id="CP000680">
    <property type="protein sequence ID" value="ABP83718.1"/>
    <property type="molecule type" value="Genomic_DNA"/>
</dbReference>
<dbReference type="SMR" id="A4XQV2"/>
<dbReference type="STRING" id="399739.Pmen_0950"/>
<dbReference type="KEGG" id="pmy:Pmen_0950"/>
<dbReference type="eggNOG" id="COG0268">
    <property type="taxonomic scope" value="Bacteria"/>
</dbReference>
<dbReference type="HOGENOM" id="CLU_160655_4_0_6"/>
<dbReference type="OrthoDB" id="9807974at2"/>
<dbReference type="GO" id="GO:0005829">
    <property type="term" value="C:cytosol"/>
    <property type="evidence" value="ECO:0007669"/>
    <property type="project" value="TreeGrafter"/>
</dbReference>
<dbReference type="GO" id="GO:0015935">
    <property type="term" value="C:small ribosomal subunit"/>
    <property type="evidence" value="ECO:0007669"/>
    <property type="project" value="TreeGrafter"/>
</dbReference>
<dbReference type="GO" id="GO:0070181">
    <property type="term" value="F:small ribosomal subunit rRNA binding"/>
    <property type="evidence" value="ECO:0007669"/>
    <property type="project" value="TreeGrafter"/>
</dbReference>
<dbReference type="GO" id="GO:0003735">
    <property type="term" value="F:structural constituent of ribosome"/>
    <property type="evidence" value="ECO:0007669"/>
    <property type="project" value="InterPro"/>
</dbReference>
<dbReference type="GO" id="GO:0006412">
    <property type="term" value="P:translation"/>
    <property type="evidence" value="ECO:0007669"/>
    <property type="project" value="UniProtKB-UniRule"/>
</dbReference>
<dbReference type="FunFam" id="1.20.58.110:FF:000001">
    <property type="entry name" value="30S ribosomal protein S20"/>
    <property type="match status" value="1"/>
</dbReference>
<dbReference type="Gene3D" id="1.20.58.110">
    <property type="entry name" value="Ribosomal protein S20"/>
    <property type="match status" value="1"/>
</dbReference>
<dbReference type="HAMAP" id="MF_00500">
    <property type="entry name" value="Ribosomal_bS20"/>
    <property type="match status" value="1"/>
</dbReference>
<dbReference type="InterPro" id="IPR002583">
    <property type="entry name" value="Ribosomal_bS20"/>
</dbReference>
<dbReference type="InterPro" id="IPR036510">
    <property type="entry name" value="Ribosomal_bS20_sf"/>
</dbReference>
<dbReference type="NCBIfam" id="TIGR00029">
    <property type="entry name" value="S20"/>
    <property type="match status" value="1"/>
</dbReference>
<dbReference type="PANTHER" id="PTHR33398">
    <property type="entry name" value="30S RIBOSOMAL PROTEIN S20"/>
    <property type="match status" value="1"/>
</dbReference>
<dbReference type="PANTHER" id="PTHR33398:SF1">
    <property type="entry name" value="SMALL RIBOSOMAL SUBUNIT PROTEIN BS20C"/>
    <property type="match status" value="1"/>
</dbReference>
<dbReference type="Pfam" id="PF01649">
    <property type="entry name" value="Ribosomal_S20p"/>
    <property type="match status" value="1"/>
</dbReference>
<dbReference type="SUPFAM" id="SSF46992">
    <property type="entry name" value="Ribosomal protein S20"/>
    <property type="match status" value="1"/>
</dbReference>
<comment type="function">
    <text evidence="1">Binds directly to 16S ribosomal RNA.</text>
</comment>
<comment type="similarity">
    <text evidence="1">Belongs to the bacterial ribosomal protein bS20 family.</text>
</comment>
<organism>
    <name type="scientific">Ectopseudomonas mendocina (strain ymp)</name>
    <name type="common">Pseudomonas mendocina</name>
    <dbReference type="NCBI Taxonomy" id="399739"/>
    <lineage>
        <taxon>Bacteria</taxon>
        <taxon>Pseudomonadati</taxon>
        <taxon>Pseudomonadota</taxon>
        <taxon>Gammaproteobacteria</taxon>
        <taxon>Pseudomonadales</taxon>
        <taxon>Pseudomonadaceae</taxon>
        <taxon>Ectopseudomonas</taxon>
    </lineage>
</organism>
<keyword id="KW-0687">Ribonucleoprotein</keyword>
<keyword id="KW-0689">Ribosomal protein</keyword>
<keyword id="KW-0694">RNA-binding</keyword>
<keyword id="KW-0699">rRNA-binding</keyword>
<gene>
    <name evidence="1" type="primary">rpsT</name>
    <name type="ordered locus">Pmen_0950</name>
</gene>
<name>RS20_ECTM1</name>
<reference key="1">
    <citation type="submission" date="2007-04" db="EMBL/GenBank/DDBJ databases">
        <title>Complete sequence of Pseudomonas mendocina ymp.</title>
        <authorList>
            <consortium name="US DOE Joint Genome Institute"/>
            <person name="Copeland A."/>
            <person name="Lucas S."/>
            <person name="Lapidus A."/>
            <person name="Barry K."/>
            <person name="Glavina del Rio T."/>
            <person name="Dalin E."/>
            <person name="Tice H."/>
            <person name="Pitluck S."/>
            <person name="Kiss H."/>
            <person name="Brettin T."/>
            <person name="Detter J.C."/>
            <person name="Bruce D."/>
            <person name="Han C."/>
            <person name="Schmutz J."/>
            <person name="Larimer F."/>
            <person name="Land M."/>
            <person name="Hauser L."/>
            <person name="Kyrpides N."/>
            <person name="Mikhailova N."/>
            <person name="Hersman L."/>
            <person name="Dubois J."/>
            <person name="Maurice P."/>
            <person name="Richardson P."/>
        </authorList>
    </citation>
    <scope>NUCLEOTIDE SEQUENCE [LARGE SCALE GENOMIC DNA]</scope>
    <source>
        <strain>ymp</strain>
    </source>
</reference>
<sequence>MANSPSAKKRAKQAEKRRSHNASLRSMVRTYIKNVVKAIAAKDLELAKTAYTAAVPVIDRMADKGIIHKNKAARHKSRLNAHIKALGEAAAA</sequence>
<protein>
    <recommendedName>
        <fullName evidence="1">Small ribosomal subunit protein bS20</fullName>
    </recommendedName>
    <alternativeName>
        <fullName evidence="3">30S ribosomal protein S20</fullName>
    </alternativeName>
</protein>
<proteinExistence type="inferred from homology"/>
<accession>A4XQV2</accession>
<feature type="chain" id="PRO_1000014633" description="Small ribosomal subunit protein bS20">
    <location>
        <begin position="1"/>
        <end position="92"/>
    </location>
</feature>
<feature type="region of interest" description="Disordered" evidence="2">
    <location>
        <begin position="1"/>
        <end position="23"/>
    </location>
</feature>
<feature type="compositionally biased region" description="Basic residues" evidence="2">
    <location>
        <begin position="7"/>
        <end position="20"/>
    </location>
</feature>
<evidence type="ECO:0000255" key="1">
    <source>
        <dbReference type="HAMAP-Rule" id="MF_00500"/>
    </source>
</evidence>
<evidence type="ECO:0000256" key="2">
    <source>
        <dbReference type="SAM" id="MobiDB-lite"/>
    </source>
</evidence>
<evidence type="ECO:0000305" key="3"/>